<gene>
    <name evidence="1" type="primary">rpmH</name>
    <name type="ordered locus">RHOS4_26750</name>
    <name type="ORF">RSP_1059</name>
</gene>
<accession>Q3IYZ1</accession>
<proteinExistence type="inferred from homology"/>
<sequence>MKRTFQPSNLVRARRHGFRARMATKGGRLVLNARRAKGRKKLSA</sequence>
<dbReference type="EMBL" id="CP000143">
    <property type="protein sequence ID" value="ABA80243.1"/>
    <property type="molecule type" value="Genomic_DNA"/>
</dbReference>
<dbReference type="RefSeq" id="WP_002721419.1">
    <property type="nucleotide sequence ID" value="NZ_CP030271.1"/>
</dbReference>
<dbReference type="RefSeq" id="YP_354144.1">
    <property type="nucleotide sequence ID" value="NC_007493.2"/>
</dbReference>
<dbReference type="SMR" id="Q3IYZ1"/>
<dbReference type="STRING" id="272943.RSP_1059"/>
<dbReference type="EnsemblBacteria" id="ABA80243">
    <property type="protein sequence ID" value="ABA80243"/>
    <property type="gene ID" value="RSP_1059"/>
</dbReference>
<dbReference type="GeneID" id="67447833"/>
<dbReference type="KEGG" id="rsp:RSP_1059"/>
<dbReference type="PATRIC" id="fig|272943.9.peg.3033"/>
<dbReference type="eggNOG" id="COG0230">
    <property type="taxonomic scope" value="Bacteria"/>
</dbReference>
<dbReference type="OrthoDB" id="9804164at2"/>
<dbReference type="PhylomeDB" id="Q3IYZ1"/>
<dbReference type="Proteomes" id="UP000002703">
    <property type="component" value="Chromosome 1"/>
</dbReference>
<dbReference type="GO" id="GO:1990904">
    <property type="term" value="C:ribonucleoprotein complex"/>
    <property type="evidence" value="ECO:0007669"/>
    <property type="project" value="UniProtKB-KW"/>
</dbReference>
<dbReference type="GO" id="GO:0005840">
    <property type="term" value="C:ribosome"/>
    <property type="evidence" value="ECO:0007669"/>
    <property type="project" value="UniProtKB-KW"/>
</dbReference>
<dbReference type="GO" id="GO:0003735">
    <property type="term" value="F:structural constituent of ribosome"/>
    <property type="evidence" value="ECO:0007669"/>
    <property type="project" value="InterPro"/>
</dbReference>
<dbReference type="GO" id="GO:0006412">
    <property type="term" value="P:translation"/>
    <property type="evidence" value="ECO:0007669"/>
    <property type="project" value="UniProtKB-UniRule"/>
</dbReference>
<dbReference type="FunFam" id="1.10.287.3980:FF:000001">
    <property type="entry name" value="Mitochondrial ribosomal protein L34"/>
    <property type="match status" value="1"/>
</dbReference>
<dbReference type="Gene3D" id="1.10.287.3980">
    <property type="match status" value="1"/>
</dbReference>
<dbReference type="HAMAP" id="MF_00391">
    <property type="entry name" value="Ribosomal_bL34"/>
    <property type="match status" value="1"/>
</dbReference>
<dbReference type="InterPro" id="IPR000271">
    <property type="entry name" value="Ribosomal_bL34"/>
</dbReference>
<dbReference type="InterPro" id="IPR020939">
    <property type="entry name" value="Ribosomal_bL34_CS"/>
</dbReference>
<dbReference type="NCBIfam" id="TIGR01030">
    <property type="entry name" value="rpmH_bact"/>
    <property type="match status" value="1"/>
</dbReference>
<dbReference type="PANTHER" id="PTHR14503:SF4">
    <property type="entry name" value="LARGE RIBOSOMAL SUBUNIT PROTEIN BL34M"/>
    <property type="match status" value="1"/>
</dbReference>
<dbReference type="PANTHER" id="PTHR14503">
    <property type="entry name" value="MITOCHONDRIAL RIBOSOMAL PROTEIN 34 FAMILY MEMBER"/>
    <property type="match status" value="1"/>
</dbReference>
<dbReference type="Pfam" id="PF00468">
    <property type="entry name" value="Ribosomal_L34"/>
    <property type="match status" value="1"/>
</dbReference>
<dbReference type="PROSITE" id="PS00784">
    <property type="entry name" value="RIBOSOMAL_L34"/>
    <property type="match status" value="1"/>
</dbReference>
<keyword id="KW-1185">Reference proteome</keyword>
<keyword id="KW-0687">Ribonucleoprotein</keyword>
<keyword id="KW-0689">Ribosomal protein</keyword>
<organism>
    <name type="scientific">Cereibacter sphaeroides (strain ATCC 17023 / DSM 158 / JCM 6121 / CCUG 31486 / LMG 2827 / NBRC 12203 / NCIMB 8253 / ATH 2.4.1.)</name>
    <name type="common">Rhodobacter sphaeroides</name>
    <dbReference type="NCBI Taxonomy" id="272943"/>
    <lineage>
        <taxon>Bacteria</taxon>
        <taxon>Pseudomonadati</taxon>
        <taxon>Pseudomonadota</taxon>
        <taxon>Alphaproteobacteria</taxon>
        <taxon>Rhodobacterales</taxon>
        <taxon>Paracoccaceae</taxon>
        <taxon>Cereibacter</taxon>
    </lineage>
</organism>
<reference key="1">
    <citation type="submission" date="2005-09" db="EMBL/GenBank/DDBJ databases">
        <title>Complete sequence of chromosome 1 of Rhodobacter sphaeroides 2.4.1.</title>
        <authorList>
            <person name="Copeland A."/>
            <person name="Lucas S."/>
            <person name="Lapidus A."/>
            <person name="Barry K."/>
            <person name="Detter J.C."/>
            <person name="Glavina T."/>
            <person name="Hammon N."/>
            <person name="Israni S."/>
            <person name="Pitluck S."/>
            <person name="Richardson P."/>
            <person name="Mackenzie C."/>
            <person name="Choudhary M."/>
            <person name="Larimer F."/>
            <person name="Hauser L.J."/>
            <person name="Land M."/>
            <person name="Donohue T.J."/>
            <person name="Kaplan S."/>
        </authorList>
    </citation>
    <scope>NUCLEOTIDE SEQUENCE [LARGE SCALE GENOMIC DNA]</scope>
    <source>
        <strain>ATCC 17023 / DSM 158 / JCM 6121 / CCUG 31486 / LMG 2827 / NBRC 12203 / NCIMB 8253 / ATH 2.4.1.</strain>
    </source>
</reference>
<feature type="chain" id="PRO_1000013426" description="Large ribosomal subunit protein bL34">
    <location>
        <begin position="1"/>
        <end position="44"/>
    </location>
</feature>
<evidence type="ECO:0000255" key="1">
    <source>
        <dbReference type="HAMAP-Rule" id="MF_00391"/>
    </source>
</evidence>
<evidence type="ECO:0000305" key="2"/>
<comment type="similarity">
    <text evidence="1">Belongs to the bacterial ribosomal protein bL34 family.</text>
</comment>
<protein>
    <recommendedName>
        <fullName evidence="1">Large ribosomal subunit protein bL34</fullName>
    </recommendedName>
    <alternativeName>
        <fullName evidence="2">50S ribosomal protein L34</fullName>
    </alternativeName>
</protein>
<name>RL34_CERS4</name>